<proteinExistence type="inferred from homology"/>
<keyword id="KW-1185">Reference proteome</keyword>
<keyword id="KW-0687">Ribonucleoprotein</keyword>
<keyword id="KW-0689">Ribosomal protein</keyword>
<comment type="similarity">
    <text evidence="1">Belongs to the bacterial ribosomal protein bL32 family.</text>
</comment>
<accession>Q4FUC6</accession>
<feature type="chain" id="PRO_0000225755" description="Large ribosomal subunit protein bL32">
    <location>
        <begin position="1"/>
        <end position="60"/>
    </location>
</feature>
<feature type="region of interest" description="Disordered" evidence="2">
    <location>
        <begin position="1"/>
        <end position="22"/>
    </location>
</feature>
<feature type="compositionally biased region" description="Basic residues" evidence="2">
    <location>
        <begin position="1"/>
        <end position="20"/>
    </location>
</feature>
<dbReference type="EMBL" id="CP000082">
    <property type="protein sequence ID" value="AAZ18382.1"/>
    <property type="molecule type" value="Genomic_DNA"/>
</dbReference>
<dbReference type="RefSeq" id="WP_011279813.1">
    <property type="nucleotide sequence ID" value="NC_007204.1"/>
</dbReference>
<dbReference type="SMR" id="Q4FUC6"/>
<dbReference type="STRING" id="259536.Psyc_0519"/>
<dbReference type="KEGG" id="par:Psyc_0519"/>
<dbReference type="eggNOG" id="COG0333">
    <property type="taxonomic scope" value="Bacteria"/>
</dbReference>
<dbReference type="HOGENOM" id="CLU_129084_2_1_6"/>
<dbReference type="OrthoDB" id="9801927at2"/>
<dbReference type="Proteomes" id="UP000000546">
    <property type="component" value="Chromosome"/>
</dbReference>
<dbReference type="GO" id="GO:0015934">
    <property type="term" value="C:large ribosomal subunit"/>
    <property type="evidence" value="ECO:0007669"/>
    <property type="project" value="InterPro"/>
</dbReference>
<dbReference type="GO" id="GO:0003735">
    <property type="term" value="F:structural constituent of ribosome"/>
    <property type="evidence" value="ECO:0007669"/>
    <property type="project" value="InterPro"/>
</dbReference>
<dbReference type="GO" id="GO:0006412">
    <property type="term" value="P:translation"/>
    <property type="evidence" value="ECO:0007669"/>
    <property type="project" value="UniProtKB-UniRule"/>
</dbReference>
<dbReference type="HAMAP" id="MF_00340">
    <property type="entry name" value="Ribosomal_bL32"/>
    <property type="match status" value="1"/>
</dbReference>
<dbReference type="InterPro" id="IPR002677">
    <property type="entry name" value="Ribosomal_bL32"/>
</dbReference>
<dbReference type="InterPro" id="IPR044957">
    <property type="entry name" value="Ribosomal_bL32_bact"/>
</dbReference>
<dbReference type="InterPro" id="IPR011332">
    <property type="entry name" value="Ribosomal_zn-bd"/>
</dbReference>
<dbReference type="NCBIfam" id="TIGR01031">
    <property type="entry name" value="rpmF_bact"/>
    <property type="match status" value="1"/>
</dbReference>
<dbReference type="PANTHER" id="PTHR35534">
    <property type="entry name" value="50S RIBOSOMAL PROTEIN L32"/>
    <property type="match status" value="1"/>
</dbReference>
<dbReference type="PANTHER" id="PTHR35534:SF1">
    <property type="entry name" value="LARGE RIBOSOMAL SUBUNIT PROTEIN BL32"/>
    <property type="match status" value="1"/>
</dbReference>
<dbReference type="Pfam" id="PF01783">
    <property type="entry name" value="Ribosomal_L32p"/>
    <property type="match status" value="1"/>
</dbReference>
<dbReference type="SUPFAM" id="SSF57829">
    <property type="entry name" value="Zn-binding ribosomal proteins"/>
    <property type="match status" value="1"/>
</dbReference>
<evidence type="ECO:0000255" key="1">
    <source>
        <dbReference type="HAMAP-Rule" id="MF_00340"/>
    </source>
</evidence>
<evidence type="ECO:0000256" key="2">
    <source>
        <dbReference type="SAM" id="MobiDB-lite"/>
    </source>
</evidence>
<evidence type="ECO:0000305" key="3"/>
<organism>
    <name type="scientific">Psychrobacter arcticus (strain DSM 17307 / VKM B-2377 / 273-4)</name>
    <dbReference type="NCBI Taxonomy" id="259536"/>
    <lineage>
        <taxon>Bacteria</taxon>
        <taxon>Pseudomonadati</taxon>
        <taxon>Pseudomonadota</taxon>
        <taxon>Gammaproteobacteria</taxon>
        <taxon>Moraxellales</taxon>
        <taxon>Moraxellaceae</taxon>
        <taxon>Psychrobacter</taxon>
    </lineage>
</organism>
<sequence>MAVQKSRKSRSRRDMRRSHHRMEIAEISIDATTGEKHRRHHMTKDGFYRGRQLFKVSQDA</sequence>
<protein>
    <recommendedName>
        <fullName evidence="1">Large ribosomal subunit protein bL32</fullName>
    </recommendedName>
    <alternativeName>
        <fullName evidence="3">50S ribosomal protein L32</fullName>
    </alternativeName>
</protein>
<gene>
    <name evidence="1" type="primary">rpmF</name>
    <name type="ordered locus">Psyc_0519</name>
</gene>
<name>RL32_PSYA2</name>
<reference key="1">
    <citation type="journal article" date="2010" name="Appl. Environ. Microbiol.">
        <title>The genome sequence of Psychrobacter arcticus 273-4, a psychroactive Siberian permafrost bacterium, reveals mechanisms for adaptation to low-temperature growth.</title>
        <authorList>
            <person name="Ayala-del-Rio H.L."/>
            <person name="Chain P.S."/>
            <person name="Grzymski J.J."/>
            <person name="Ponder M.A."/>
            <person name="Ivanova N."/>
            <person name="Bergholz P.W."/>
            <person name="Di Bartolo G."/>
            <person name="Hauser L."/>
            <person name="Land M."/>
            <person name="Bakermans C."/>
            <person name="Rodrigues D."/>
            <person name="Klappenbach J."/>
            <person name="Zarka D."/>
            <person name="Larimer F."/>
            <person name="Richardson P."/>
            <person name="Murray A."/>
            <person name="Thomashow M."/>
            <person name="Tiedje J.M."/>
        </authorList>
    </citation>
    <scope>NUCLEOTIDE SEQUENCE [LARGE SCALE GENOMIC DNA]</scope>
    <source>
        <strain>DSM 17307 / VKM B-2377 / 273-4</strain>
    </source>
</reference>